<protein>
    <recommendedName>
        <fullName>Putative beta-xylosidase</fullName>
        <ecNumber>3.2.1.37</ecNumber>
    </recommendedName>
    <alternativeName>
        <fullName>1,4-beta-D-xylan xylohydrolase</fullName>
    </alternativeName>
    <alternativeName>
        <fullName>Xylan 1,4-beta-xylosidase</fullName>
    </alternativeName>
</protein>
<keyword id="KW-0119">Carbohydrate metabolism</keyword>
<keyword id="KW-0326">Glycosidase</keyword>
<keyword id="KW-0378">Hydrolase</keyword>
<name>XYLO_XYLRU</name>
<accession>Q9WXE8</accession>
<feature type="chain" id="PRO_0000393239" description="Putative beta-xylosidase">
    <location>
        <begin position="1"/>
        <end position="518"/>
    </location>
</feature>
<feature type="active site" description="Proton acceptor" evidence="1">
    <location>
        <position position="47"/>
    </location>
</feature>
<feature type="active site" description="Proton donor" evidence="1">
    <location>
        <position position="203"/>
    </location>
</feature>
<feature type="site" description="Important for catalytic activity, responsible for pKa modulation of the active site Glu and correct orientation of both the proton donor and substrate" evidence="1">
    <location>
        <position position="154"/>
    </location>
</feature>
<proteinExistence type="inferred from homology"/>
<reference key="1">
    <citation type="submission" date="1999-01" db="EMBL/GenBank/DDBJ databases">
        <title>A Prevotella ruminicola T31 operon encoding xylosidase and galacturonase.</title>
        <authorList>
            <person name="Ogata K."/>
            <person name="Aminov R.I."/>
            <person name="Nagamine T."/>
            <person name="Matsui H."/>
            <person name="Tajima K."/>
            <person name="Nakamura M."/>
            <person name="Benno Y."/>
        </authorList>
    </citation>
    <scope>NUCLEOTIDE SEQUENCE [GENOMIC DNA]</scope>
    <source>
        <strain>T31</strain>
    </source>
</reference>
<reference key="2">
    <citation type="journal article" date="2001" name="Proteins">
        <title>beta-fructosidase superfamily: homology with some alpha-L-arabinases and beta-D-xylosidases.</title>
        <authorList>
            <person name="Naumoff D.G."/>
        </authorList>
    </citation>
    <scope>IDENTIFICATION OF FRAMESHIFTS</scope>
</reference>
<dbReference type="EC" id="3.2.1.37"/>
<dbReference type="EMBL" id="AB022865">
    <property type="protein sequence ID" value="BAA78558.1"/>
    <property type="status" value="ALT_FRAME"/>
    <property type="molecule type" value="Genomic_DNA"/>
</dbReference>
<dbReference type="CAZy" id="GH43">
    <property type="family name" value="Glycoside Hydrolase Family 43"/>
</dbReference>
<dbReference type="GO" id="GO:0009044">
    <property type="term" value="F:xylan 1,4-beta-xylosidase activity"/>
    <property type="evidence" value="ECO:0007669"/>
    <property type="project" value="UniProtKB-EC"/>
</dbReference>
<dbReference type="GO" id="GO:0005975">
    <property type="term" value="P:carbohydrate metabolic process"/>
    <property type="evidence" value="ECO:0007669"/>
    <property type="project" value="InterPro"/>
</dbReference>
<dbReference type="CDD" id="cd09001">
    <property type="entry name" value="GH43_FsAxh1-like"/>
    <property type="match status" value="1"/>
</dbReference>
<dbReference type="Gene3D" id="2.60.120.200">
    <property type="match status" value="1"/>
</dbReference>
<dbReference type="Gene3D" id="2.115.10.20">
    <property type="entry name" value="Glycosyl hydrolase domain, family 43"/>
    <property type="match status" value="1"/>
</dbReference>
<dbReference type="InterPro" id="IPR013320">
    <property type="entry name" value="ConA-like_dom_sf"/>
</dbReference>
<dbReference type="InterPro" id="IPR041542">
    <property type="entry name" value="GH43_C2"/>
</dbReference>
<dbReference type="InterPro" id="IPR006710">
    <property type="entry name" value="Glyco_hydro_43"/>
</dbReference>
<dbReference type="InterPro" id="IPR023296">
    <property type="entry name" value="Glyco_hydro_beta-prop_sf"/>
</dbReference>
<dbReference type="InterPro" id="IPR051795">
    <property type="entry name" value="Glycosyl_Hydrlase_43"/>
</dbReference>
<dbReference type="PANTHER" id="PTHR42812">
    <property type="entry name" value="BETA-XYLOSIDASE"/>
    <property type="match status" value="1"/>
</dbReference>
<dbReference type="PANTHER" id="PTHR42812:SF12">
    <property type="entry name" value="BETA-XYLOSIDASE-RELATED"/>
    <property type="match status" value="1"/>
</dbReference>
<dbReference type="Pfam" id="PF17851">
    <property type="entry name" value="GH43_C2"/>
    <property type="match status" value="1"/>
</dbReference>
<dbReference type="Pfam" id="PF04616">
    <property type="entry name" value="Glyco_hydro_43"/>
    <property type="match status" value="1"/>
</dbReference>
<dbReference type="SUPFAM" id="SSF75005">
    <property type="entry name" value="Arabinanase/levansucrase/invertase"/>
    <property type="match status" value="1"/>
</dbReference>
<dbReference type="SUPFAM" id="SSF49899">
    <property type="entry name" value="Concanavalin A-like lectins/glucanases"/>
    <property type="match status" value="1"/>
</dbReference>
<sequence>MHHARNVQFSNIHVSTVDEDVRPDFVEVDTKGWGDQGDGTYRNPXSDPDVIRVGNKXYMVASDFHXMGMQVLESDDMVXWRYISQIYRRFNEPGWDANLHYAGGSWAPSIRYHSGLFYVYFCTPDEGLYMSTASNPAGPWAPLHLVKRVAKWEDPCPFWDEDGQAYIGRSQHGAGPIIVHRMSADGKTLLDEGKTVYEGPIAEGTKFMKRNGWYYLIIPEGGVGTGWQTVLRARNIYGPYERRIVLEQGSTGVNGPHQGALVDAPDGSWWFYHFQETPVLGRVVHLQPARWEADWPVIGVDYDKNGIGEPVATWKKPVSSVGTAGFQTCDDSNDALGLHWQWNHNPVDTHWNLTDRKGWLTLKAMPADSLKMVRNMLTQKVVGYQSESTTKVSIKGDSYAGLFCSGKLFCGVGLCKDGVFIEFGGQRKIIDKGSYQEVWFKVTNDCEQNRHLFYYSIDGEHYQPAGSAFAMSGGYWKGIRVGCLTTFLQAKRLLRARHLRMLNSTISIKNSPNSLADC</sequence>
<evidence type="ECO:0000250" key="1">
    <source>
        <dbReference type="UniProtKB" id="A7LXU0"/>
    </source>
</evidence>
<evidence type="ECO:0000305" key="2"/>
<comment type="catalytic activity">
    <reaction>
        <text>Hydrolysis of (1-&gt;4)-beta-D-xylans, to remove successive D-xylose residues from the non-reducing termini.</text>
        <dbReference type="EC" id="3.2.1.37"/>
    </reaction>
</comment>
<comment type="similarity">
    <text evidence="2">Belongs to the glycosyl hydrolase 43 family.</text>
</comment>
<comment type="sequence caution" evidence="2">
    <conflict type="frameshift">
        <sequence resource="EMBL-CDS" id="BAA78558"/>
    </conflict>
</comment>
<organism>
    <name type="scientific">Xylanibacter ruminicola</name>
    <name type="common">Prevotella ruminicola</name>
    <dbReference type="NCBI Taxonomy" id="839"/>
    <lineage>
        <taxon>Bacteria</taxon>
        <taxon>Pseudomonadati</taxon>
        <taxon>Bacteroidota</taxon>
        <taxon>Bacteroidia</taxon>
        <taxon>Bacteroidales</taxon>
        <taxon>Prevotellaceae</taxon>
        <taxon>Xylanibacter</taxon>
    </lineage>
</organism>